<dbReference type="EMBL" id="AE015924">
    <property type="protein sequence ID" value="AAQ66938.1"/>
    <property type="molecule type" value="Genomic_DNA"/>
</dbReference>
<dbReference type="RefSeq" id="WP_004583624.1">
    <property type="nucleotide sequence ID" value="NC_002950.2"/>
</dbReference>
<dbReference type="SMR" id="Q7MTJ4"/>
<dbReference type="STRING" id="242619.PG_1960"/>
<dbReference type="EnsemblBacteria" id="AAQ66938">
    <property type="protein sequence ID" value="AAQ66938"/>
    <property type="gene ID" value="PG_1960"/>
</dbReference>
<dbReference type="GeneID" id="29257040"/>
<dbReference type="GeneID" id="57239615"/>
<dbReference type="KEGG" id="pgi:PG_1960"/>
<dbReference type="eggNOG" id="COG0227">
    <property type="taxonomic scope" value="Bacteria"/>
</dbReference>
<dbReference type="HOGENOM" id="CLU_064548_3_1_10"/>
<dbReference type="Proteomes" id="UP000000588">
    <property type="component" value="Chromosome"/>
</dbReference>
<dbReference type="GO" id="GO:1990904">
    <property type="term" value="C:ribonucleoprotein complex"/>
    <property type="evidence" value="ECO:0007669"/>
    <property type="project" value="UniProtKB-KW"/>
</dbReference>
<dbReference type="GO" id="GO:0005840">
    <property type="term" value="C:ribosome"/>
    <property type="evidence" value="ECO:0007669"/>
    <property type="project" value="UniProtKB-KW"/>
</dbReference>
<dbReference type="GO" id="GO:0003735">
    <property type="term" value="F:structural constituent of ribosome"/>
    <property type="evidence" value="ECO:0007669"/>
    <property type="project" value="InterPro"/>
</dbReference>
<dbReference type="GO" id="GO:0006412">
    <property type="term" value="P:translation"/>
    <property type="evidence" value="ECO:0007669"/>
    <property type="project" value="UniProtKB-UniRule"/>
</dbReference>
<dbReference type="Gene3D" id="2.30.170.40">
    <property type="entry name" value="Ribosomal protein L28/L24"/>
    <property type="match status" value="1"/>
</dbReference>
<dbReference type="HAMAP" id="MF_00373">
    <property type="entry name" value="Ribosomal_bL28"/>
    <property type="match status" value="1"/>
</dbReference>
<dbReference type="InterPro" id="IPR026569">
    <property type="entry name" value="Ribosomal_bL28"/>
</dbReference>
<dbReference type="InterPro" id="IPR034704">
    <property type="entry name" value="Ribosomal_bL28/bL31-like_sf"/>
</dbReference>
<dbReference type="InterPro" id="IPR001383">
    <property type="entry name" value="Ribosomal_bL28_bact-type"/>
</dbReference>
<dbReference type="InterPro" id="IPR037147">
    <property type="entry name" value="Ribosomal_bL28_sf"/>
</dbReference>
<dbReference type="NCBIfam" id="TIGR00009">
    <property type="entry name" value="L28"/>
    <property type="match status" value="1"/>
</dbReference>
<dbReference type="PANTHER" id="PTHR13528">
    <property type="entry name" value="39S RIBOSOMAL PROTEIN L28, MITOCHONDRIAL"/>
    <property type="match status" value="1"/>
</dbReference>
<dbReference type="PANTHER" id="PTHR13528:SF2">
    <property type="entry name" value="LARGE RIBOSOMAL SUBUNIT PROTEIN BL28M"/>
    <property type="match status" value="1"/>
</dbReference>
<dbReference type="Pfam" id="PF00830">
    <property type="entry name" value="Ribosomal_L28"/>
    <property type="match status" value="1"/>
</dbReference>
<dbReference type="SUPFAM" id="SSF143800">
    <property type="entry name" value="L28p-like"/>
    <property type="match status" value="1"/>
</dbReference>
<gene>
    <name evidence="1" type="primary">rpmB</name>
    <name type="ordered locus">PG_1960</name>
</gene>
<evidence type="ECO:0000255" key="1">
    <source>
        <dbReference type="HAMAP-Rule" id="MF_00373"/>
    </source>
</evidence>
<evidence type="ECO:0000305" key="2"/>
<organism>
    <name type="scientific">Porphyromonas gingivalis (strain ATCC BAA-308 / W83)</name>
    <dbReference type="NCBI Taxonomy" id="242619"/>
    <lineage>
        <taxon>Bacteria</taxon>
        <taxon>Pseudomonadati</taxon>
        <taxon>Bacteroidota</taxon>
        <taxon>Bacteroidia</taxon>
        <taxon>Bacteroidales</taxon>
        <taxon>Porphyromonadaceae</taxon>
        <taxon>Porphyromonas</taxon>
    </lineage>
</organism>
<name>RL28_PORGI</name>
<keyword id="KW-1185">Reference proteome</keyword>
<keyword id="KW-0687">Ribonucleoprotein</keyword>
<keyword id="KW-0689">Ribosomal protein</keyword>
<comment type="similarity">
    <text evidence="1">Belongs to the bacterial ribosomal protein bL28 family.</text>
</comment>
<protein>
    <recommendedName>
        <fullName evidence="1">Large ribosomal subunit protein bL28</fullName>
    </recommendedName>
    <alternativeName>
        <fullName evidence="2">50S ribosomal protein L28</fullName>
    </alternativeName>
</protein>
<sequence>MSKICQITGKKAMVGNNVSHSKRRTKRVFDVNLFRKKFYWVEQDCWVVLRISAAGLRLINKIGLDAAIKRAAEKGFLNA</sequence>
<accession>Q7MTJ4</accession>
<reference key="1">
    <citation type="journal article" date="2003" name="J. Bacteriol.">
        <title>Complete genome sequence of the oral pathogenic bacterium Porphyromonas gingivalis strain W83.</title>
        <authorList>
            <person name="Nelson K.E."/>
            <person name="Fleischmann R.D."/>
            <person name="DeBoy R.T."/>
            <person name="Paulsen I.T."/>
            <person name="Fouts D.E."/>
            <person name="Eisen J.A."/>
            <person name="Daugherty S.C."/>
            <person name="Dodson R.J."/>
            <person name="Durkin A.S."/>
            <person name="Gwinn M.L."/>
            <person name="Haft D.H."/>
            <person name="Kolonay J.F."/>
            <person name="Nelson W.C."/>
            <person name="Mason T.M."/>
            <person name="Tallon L."/>
            <person name="Gray J."/>
            <person name="Granger D."/>
            <person name="Tettelin H."/>
            <person name="Dong H."/>
            <person name="Galvin J.L."/>
            <person name="Duncan M.J."/>
            <person name="Dewhirst F.E."/>
            <person name="Fraser C.M."/>
        </authorList>
    </citation>
    <scope>NUCLEOTIDE SEQUENCE [LARGE SCALE GENOMIC DNA]</scope>
    <source>
        <strain>ATCC BAA-308 / W83</strain>
    </source>
</reference>
<feature type="chain" id="PRO_0000178526" description="Large ribosomal subunit protein bL28">
    <location>
        <begin position="1"/>
        <end position="79"/>
    </location>
</feature>
<proteinExistence type="inferred from homology"/>